<name>DFI1_CANAL</name>
<gene>
    <name evidence="6" type="primary">DFI1</name>
    <name type="ordered locus">CAALFM_C700360WA</name>
    <name type="ORF">CaO19.7084</name>
</gene>
<accession>Q5AFI4</accession>
<accession>A0A1D8PQK9</accession>
<accession>Q3MPU3</accession>
<keyword id="KW-1003">Cell membrane</keyword>
<keyword id="KW-0134">Cell wall</keyword>
<keyword id="KW-0325">Glycoprotein</keyword>
<keyword id="KW-0472">Membrane</keyword>
<keyword id="KW-1185">Reference proteome</keyword>
<keyword id="KW-0964">Secreted</keyword>
<keyword id="KW-0812">Transmembrane</keyword>
<keyword id="KW-1133">Transmembrane helix</keyword>
<keyword id="KW-0843">Virulence</keyword>
<comment type="function">
    <text evidence="4 5">Cell-surface associated glycoprotein that acts as a plasma membrane receptor-type protein which senses the presence of matrix. Binds to calmodulin in response to environmental conditions and initiates a signaling cascade that activates CEK1, thus promoting invasive filamentation. Involved in the maintenance of the cell wall.</text>
</comment>
<comment type="subcellular location">
    <subcellularLocation>
        <location evidence="4">Cell membrane</location>
        <topology evidence="4">Multi-pass membrane protein</topology>
    </subcellularLocation>
    <subcellularLocation>
        <location evidence="4">Cell septum</location>
    </subcellularLocation>
    <subcellularLocation>
        <location evidence="4">Secreted</location>
        <location evidence="4">Cell wall</location>
    </subcellularLocation>
    <text evidence="4">A part becomes cross-linked to the cell wall and thus links the cell wall to the plasma membrane and cytoplasm.</text>
</comment>
<comment type="domain">
    <text evidence="4">The GxxxG glycophorin motif in the transmembrane domain is required for CEK1 activation and subsequent invasive filamentation on agar medium.</text>
</comment>
<comment type="domain">
    <text evidence="5">The cytoplasmic C-terminal calmodulin-binding motif (residues 301 to 317) is important for CEK1 activation and subsequent invasive filamentation on agar medium.</text>
</comment>
<comment type="PTM">
    <text evidence="4">Cross-linked to the carbohydrate polymers of the cell wall.</text>
</comment>
<comment type="PTM">
    <text evidence="4">O-glycosylated by MNT1 and MNT2. Also N-glycosylated.</text>
</comment>
<comment type="disruption phenotype">
    <text evidence="4 5">Shows defects in invasion of agar medium and attenuated virulence in a murine model of disseminated candidiasis. Leads to hypersensibility to the glucan synthase inhibitor capsofungin and the cell wall disturbing agents Congo red and calcofluor white.</text>
</comment>
<comment type="similarity">
    <text evidence="7">Belongs to the MID2 like cell wall stress sensor family.</text>
</comment>
<dbReference type="EMBL" id="CP017629">
    <property type="protein sequence ID" value="AOW30415.1"/>
    <property type="molecule type" value="Genomic_DNA"/>
</dbReference>
<dbReference type="RefSeq" id="XP_720375.1">
    <property type="nucleotide sequence ID" value="XM_715282.1"/>
</dbReference>
<dbReference type="SMR" id="Q5AFI4"/>
<dbReference type="STRING" id="237561.Q5AFI4"/>
<dbReference type="GlyCosmos" id="Q5AFI4">
    <property type="glycosylation" value="4 sites, No reported glycans"/>
</dbReference>
<dbReference type="EnsemblFungi" id="C7_00360W_A-T">
    <property type="protein sequence ID" value="C7_00360W_A-T-p1"/>
    <property type="gene ID" value="C7_00360W_A"/>
</dbReference>
<dbReference type="GeneID" id="3638038"/>
<dbReference type="KEGG" id="cal:CAALFM_C700360WA"/>
<dbReference type="CGD" id="CAL0000194442">
    <property type="gene designation" value="DFI1"/>
</dbReference>
<dbReference type="VEuPathDB" id="FungiDB:C7_00360W_A"/>
<dbReference type="eggNOG" id="ENOG502S35T">
    <property type="taxonomic scope" value="Eukaryota"/>
</dbReference>
<dbReference type="HOGENOM" id="CLU_823854_0_0_1"/>
<dbReference type="InParanoid" id="Q5AFI4"/>
<dbReference type="OMA" id="LDQYHKP"/>
<dbReference type="OrthoDB" id="4026433at2759"/>
<dbReference type="Proteomes" id="UP000000559">
    <property type="component" value="Chromosome 7"/>
</dbReference>
<dbReference type="GO" id="GO:0030428">
    <property type="term" value="C:cell septum"/>
    <property type="evidence" value="ECO:0007669"/>
    <property type="project" value="UniProtKB-SubCell"/>
</dbReference>
<dbReference type="GO" id="GO:0009986">
    <property type="term" value="C:cell surface"/>
    <property type="evidence" value="ECO:0000314"/>
    <property type="project" value="CGD"/>
</dbReference>
<dbReference type="GO" id="GO:0005576">
    <property type="term" value="C:extracellular region"/>
    <property type="evidence" value="ECO:0007669"/>
    <property type="project" value="UniProtKB-KW"/>
</dbReference>
<dbReference type="GO" id="GO:0016020">
    <property type="term" value="C:membrane"/>
    <property type="evidence" value="ECO:0000314"/>
    <property type="project" value="CGD"/>
</dbReference>
<dbReference type="GO" id="GO:0005886">
    <property type="term" value="C:plasma membrane"/>
    <property type="evidence" value="ECO:0000314"/>
    <property type="project" value="CGD"/>
</dbReference>
<dbReference type="GO" id="GO:0005516">
    <property type="term" value="F:calmodulin binding"/>
    <property type="evidence" value="ECO:0000314"/>
    <property type="project" value="CGD"/>
</dbReference>
<dbReference type="GO" id="GO:0019722">
    <property type="term" value="P:calcium-mediated signaling"/>
    <property type="evidence" value="ECO:0000315"/>
    <property type="project" value="CGD"/>
</dbReference>
<dbReference type="GO" id="GO:0007155">
    <property type="term" value="P:cell adhesion"/>
    <property type="evidence" value="ECO:0000315"/>
    <property type="project" value="CGD"/>
</dbReference>
<dbReference type="GO" id="GO:0036267">
    <property type="term" value="P:invasive filamentous growth"/>
    <property type="evidence" value="ECO:0000315"/>
    <property type="project" value="CGD"/>
</dbReference>
<dbReference type="GO" id="GO:0000165">
    <property type="term" value="P:MAPK cascade"/>
    <property type="evidence" value="ECO:0000315"/>
    <property type="project" value="CGD"/>
</dbReference>
<dbReference type="InterPro" id="IPR007567">
    <property type="entry name" value="Mid2_dom"/>
</dbReference>
<dbReference type="Pfam" id="PF04478">
    <property type="entry name" value="Mid2"/>
    <property type="match status" value="1"/>
</dbReference>
<reference key="1">
    <citation type="journal article" date="2004" name="Proc. Natl. Acad. Sci. U.S.A.">
        <title>The diploid genome sequence of Candida albicans.</title>
        <authorList>
            <person name="Jones T."/>
            <person name="Federspiel N.A."/>
            <person name="Chibana H."/>
            <person name="Dungan J."/>
            <person name="Kalman S."/>
            <person name="Magee B.B."/>
            <person name="Newport G."/>
            <person name="Thorstenson Y.R."/>
            <person name="Agabian N."/>
            <person name="Magee P.T."/>
            <person name="Davis R.W."/>
            <person name="Scherer S."/>
        </authorList>
    </citation>
    <scope>NUCLEOTIDE SEQUENCE [LARGE SCALE GENOMIC DNA]</scope>
    <source>
        <strain>SC5314 / ATCC MYA-2876</strain>
    </source>
</reference>
<reference key="2">
    <citation type="journal article" date="2007" name="Genome Biol.">
        <title>Assembly of the Candida albicans genome into sixteen supercontigs aligned on the eight chromosomes.</title>
        <authorList>
            <person name="van het Hoog M."/>
            <person name="Rast T.J."/>
            <person name="Martchenko M."/>
            <person name="Grindle S."/>
            <person name="Dignard D."/>
            <person name="Hogues H."/>
            <person name="Cuomo C."/>
            <person name="Berriman M."/>
            <person name="Scherer S."/>
            <person name="Magee B.B."/>
            <person name="Whiteway M."/>
            <person name="Chibana H."/>
            <person name="Nantel A."/>
            <person name="Magee P.T."/>
        </authorList>
    </citation>
    <scope>GENOME REANNOTATION</scope>
    <source>
        <strain>SC5314 / ATCC MYA-2876</strain>
    </source>
</reference>
<reference key="3">
    <citation type="journal article" date="2013" name="Genome Biol.">
        <title>Assembly of a phased diploid Candida albicans genome facilitates allele-specific measurements and provides a simple model for repeat and indel structure.</title>
        <authorList>
            <person name="Muzzey D."/>
            <person name="Schwartz K."/>
            <person name="Weissman J.S."/>
            <person name="Sherlock G."/>
        </authorList>
    </citation>
    <scope>NUCLEOTIDE SEQUENCE [LARGE SCALE GENOMIC DNA]</scope>
    <scope>GENOME REANNOTATION</scope>
    <source>
        <strain>SC5314 / ATCC MYA-2876</strain>
    </source>
</reference>
<reference key="4">
    <citation type="journal article" date="2010" name="Mol. Microbiol.">
        <title>A Candida albicans cell wall-linked protein promotes invasive filamentation into semi-solid medium.</title>
        <authorList>
            <person name="Zucchi P.C."/>
            <person name="Davis T.R."/>
            <person name="Kumamoto C.A."/>
        </authorList>
    </citation>
    <scope>FUNCTION</scope>
    <scope>DISRUPTION PHENOTYPE</scope>
    <scope>DOMAIN</scope>
    <scope>MUTAGENESIS OF GLY-273 AND GLY-277</scope>
    <scope>SUBCELLULAR LOCATION</scope>
    <scope>GLYCOSYLATION</scope>
</reference>
<reference key="5">
    <citation type="journal article" date="2013" name="PLoS ONE">
        <title>Calmodulin binding to Dfi1p promotes invasiveness of Candida albicans.</title>
        <authorList>
            <person name="Davis T.R."/>
            <person name="Zucchi P.C."/>
            <person name="Kumamoto C.A."/>
        </authorList>
    </citation>
    <scope>FUNCTION</scope>
    <scope>DOMAIN</scope>
    <scope>CALMODULIN-BINDING</scope>
    <scope>DISRUPTION PHENOTYPE</scope>
</reference>
<sequence>MEKLSINNNNNNRRYQSRRFDGITIIRIVVLVFIVTVSTYFVNSYTCNQPHHNHSTRPSHYLPINGTHGLMNNDDSLHNKGAIGHYNTTVSLERRADENNSTTNGLFPSTSSSTFIFTPSSSSSSTFQQSRSSPQTTSTSSFVATTSSFQQETSQTSIPDTTTDFSFSSFSEAPTTSTTSSTSEFSSTPQETSNTVTSTSSTSTSSSSSPTSSPATTSASQHVTTFSSVDNGKTIVVTRTSVISSSPTASNSNNNKNNDNGGGLSHTNRIVVGVVVGVGGSILIGLLAVLFYLRKRNNRDYEGGWTFWRKNEKLGSDEFFNGELGVRDRNINQGSNF</sequence>
<proteinExistence type="evidence at protein level"/>
<protein>
    <recommendedName>
        <fullName evidence="7">Cell-surface associated glycoprotein DFI1</fullName>
    </recommendedName>
    <alternativeName>
        <fullName evidence="6">Defective in filamentous invasion protein 1</fullName>
    </alternativeName>
</protein>
<evidence type="ECO:0000255" key="1"/>
<evidence type="ECO:0000255" key="2">
    <source>
        <dbReference type="PROSITE-ProRule" id="PRU00498"/>
    </source>
</evidence>
<evidence type="ECO:0000256" key="3">
    <source>
        <dbReference type="SAM" id="MobiDB-lite"/>
    </source>
</evidence>
<evidence type="ECO:0000269" key="4">
    <source>
    </source>
</evidence>
<evidence type="ECO:0000269" key="5">
    <source>
    </source>
</evidence>
<evidence type="ECO:0000303" key="6">
    <source>
    </source>
</evidence>
<evidence type="ECO:0000305" key="7"/>
<organism>
    <name type="scientific">Candida albicans (strain SC5314 / ATCC MYA-2876)</name>
    <name type="common">Yeast</name>
    <dbReference type="NCBI Taxonomy" id="237561"/>
    <lineage>
        <taxon>Eukaryota</taxon>
        <taxon>Fungi</taxon>
        <taxon>Dikarya</taxon>
        <taxon>Ascomycota</taxon>
        <taxon>Saccharomycotina</taxon>
        <taxon>Pichiomycetes</taxon>
        <taxon>Debaryomycetaceae</taxon>
        <taxon>Candida/Lodderomyces clade</taxon>
        <taxon>Candida</taxon>
    </lineage>
</organism>
<feature type="chain" id="PRO_0000431721" description="Cell-surface associated glycoprotein DFI1">
    <location>
        <begin position="1"/>
        <end position="337"/>
    </location>
</feature>
<feature type="topological domain" description="Cytoplasmic" evidence="7">
    <location>
        <begin position="1"/>
        <end position="21"/>
    </location>
</feature>
<feature type="transmembrane region" description="Helical; Name=1" evidence="1">
    <location>
        <begin position="22"/>
        <end position="42"/>
    </location>
</feature>
<feature type="topological domain" description="Extracellular" evidence="7">
    <location>
        <begin position="43"/>
        <end position="269"/>
    </location>
</feature>
<feature type="transmembrane region" description="Helical; Name=2" evidence="1">
    <location>
        <begin position="270"/>
        <end position="290"/>
    </location>
</feature>
<feature type="topological domain" description="Cytoplasmic" evidence="7">
    <location>
        <begin position="291"/>
        <end position="337"/>
    </location>
</feature>
<feature type="region of interest" description="Disordered" evidence="3">
    <location>
        <begin position="124"/>
        <end position="224"/>
    </location>
</feature>
<feature type="region of interest" description="Disordered" evidence="3">
    <location>
        <begin position="241"/>
        <end position="265"/>
    </location>
</feature>
<feature type="short sequence motif" description="Glycophorin A" evidence="6">
    <location>
        <begin position="273"/>
        <end position="277"/>
    </location>
</feature>
<feature type="short sequence motif" description="Calmodulin-binding" evidence="5">
    <location>
        <begin position="301"/>
        <end position="314"/>
    </location>
</feature>
<feature type="compositionally biased region" description="Low complexity" evidence="3">
    <location>
        <begin position="124"/>
        <end position="220"/>
    </location>
</feature>
<feature type="compositionally biased region" description="Low complexity" evidence="3">
    <location>
        <begin position="241"/>
        <end position="259"/>
    </location>
</feature>
<feature type="glycosylation site" description="N-linked (GlcNAc...) asparagine" evidence="2">
    <location>
        <position position="53"/>
    </location>
</feature>
<feature type="glycosylation site" description="N-linked (GlcNAc...) asparagine" evidence="2">
    <location>
        <position position="65"/>
    </location>
</feature>
<feature type="glycosylation site" description="N-linked (GlcNAc...) asparagine" evidence="2">
    <location>
        <position position="87"/>
    </location>
</feature>
<feature type="glycosylation site" description="N-linked (GlcNAc...) asparagine" evidence="2">
    <location>
        <position position="100"/>
    </location>
</feature>
<feature type="mutagenesis site" description="Impairs CEK1 activation and invasive filamentation; when associated with L-277." evidence="4">
    <original>G</original>
    <variation>L</variation>
    <location>
        <position position="273"/>
    </location>
</feature>
<feature type="mutagenesis site" description="Impairs CEK1 activation and invasive filamentation; when associated with L-273." evidence="4">
    <original>G</original>
    <variation>L</variation>
    <location>
        <position position="277"/>
    </location>
</feature>